<feature type="chain" id="PRO_0000255191" description="Lipid-A-disaccharide synthase 2">
    <location>
        <begin position="1"/>
        <end position="385"/>
    </location>
</feature>
<name>LPXB2_LEGPL</name>
<proteinExistence type="inferred from homology"/>
<gene>
    <name evidence="1" type="primary">lpxB2</name>
    <name type="ordered locus">lpl2872</name>
</gene>
<keyword id="KW-0328">Glycosyltransferase</keyword>
<keyword id="KW-0441">Lipid A biosynthesis</keyword>
<keyword id="KW-0444">Lipid biosynthesis</keyword>
<keyword id="KW-0443">Lipid metabolism</keyword>
<keyword id="KW-0808">Transferase</keyword>
<accession>Q5WSK6</accession>
<sequence length="385" mass="43707">MIKKRQTRIAMIAGEMSGDLLGAGVIRELKKHLKNVEFIGVGGPQMLEEGFQSLANMSELSVMGISDVLRRYPQLYFIRERLLKEWTINPPDVFIGIDYPDFNLSVETRLKRQNVKTVHLVSPKVWAWRQKRVYLIKKAVDLVLTLFPFEESFYQQYDVPAQFVGHPLADLIEINPNNADLRKKYNYKPDDTILAVLPGSRIGEIKYIGPLFLEVMQRIAVEMPHVHFIVPIACQELYPVFFKQFQARYSHLKIQIIQGNAREAMAISDVVLTKSGTATLEAMLLKRPMVVAFKWSKFTHAIIAPQVKIPYVALPNLLANKKLVPEFVQEKATANSITESVLNLLACPSQSNLNKQFTAIHHTLRQNANEKAALSILKILETSSA</sequence>
<reference key="1">
    <citation type="journal article" date="2004" name="Nat. Genet.">
        <title>Evidence in the Legionella pneumophila genome for exploitation of host cell functions and high genome plasticity.</title>
        <authorList>
            <person name="Cazalet C."/>
            <person name="Rusniok C."/>
            <person name="Brueggemann H."/>
            <person name="Zidane N."/>
            <person name="Magnier A."/>
            <person name="Ma L."/>
            <person name="Tichit M."/>
            <person name="Jarraud S."/>
            <person name="Bouchier C."/>
            <person name="Vandenesch F."/>
            <person name="Kunst F."/>
            <person name="Etienne J."/>
            <person name="Glaser P."/>
            <person name="Buchrieser C."/>
        </authorList>
    </citation>
    <scope>NUCLEOTIDE SEQUENCE [LARGE SCALE GENOMIC DNA]</scope>
    <source>
        <strain>Lens</strain>
    </source>
</reference>
<comment type="function">
    <text evidence="1">Condensation of UDP-2,3-diacylglucosamine and 2,3-diacylglucosamine-1-phosphate to form lipid A disaccharide, a precursor of lipid A, a phosphorylated glycolipid that anchors the lipopolysaccharide to the outer membrane of the cell.</text>
</comment>
<comment type="catalytic activity">
    <reaction evidence="1">
        <text>a lipid X + a UDP-2-N,3-O-bis[(3R)-3-hydroxyacyl]-alpha-D-glucosamine = a lipid A disaccharide + UDP + H(+)</text>
        <dbReference type="Rhea" id="RHEA:67828"/>
        <dbReference type="ChEBI" id="CHEBI:15378"/>
        <dbReference type="ChEBI" id="CHEBI:58223"/>
        <dbReference type="ChEBI" id="CHEBI:137748"/>
        <dbReference type="ChEBI" id="CHEBI:176338"/>
        <dbReference type="ChEBI" id="CHEBI:176343"/>
        <dbReference type="EC" id="2.4.1.182"/>
    </reaction>
</comment>
<comment type="pathway">
    <text evidence="1">Bacterial outer membrane biogenesis; LPS lipid A biosynthesis.</text>
</comment>
<comment type="similarity">
    <text evidence="1">Belongs to the LpxB family.</text>
</comment>
<dbReference type="EC" id="2.4.1.182" evidence="1"/>
<dbReference type="EMBL" id="CR628337">
    <property type="protein sequence ID" value="CAH17116.1"/>
    <property type="molecule type" value="Genomic_DNA"/>
</dbReference>
<dbReference type="RefSeq" id="WP_011216786.1">
    <property type="nucleotide sequence ID" value="NC_006369.1"/>
</dbReference>
<dbReference type="SMR" id="Q5WSK6"/>
<dbReference type="CAZy" id="GT19">
    <property type="family name" value="Glycosyltransferase Family 19"/>
</dbReference>
<dbReference type="KEGG" id="lpf:lpl2872"/>
<dbReference type="LegioList" id="lpl2872"/>
<dbReference type="HOGENOM" id="CLU_036577_3_0_6"/>
<dbReference type="BRENDA" id="2.4.1.182">
    <property type="organism ID" value="2943"/>
</dbReference>
<dbReference type="UniPathway" id="UPA00973"/>
<dbReference type="Proteomes" id="UP000002517">
    <property type="component" value="Chromosome"/>
</dbReference>
<dbReference type="GO" id="GO:0016020">
    <property type="term" value="C:membrane"/>
    <property type="evidence" value="ECO:0007669"/>
    <property type="project" value="GOC"/>
</dbReference>
<dbReference type="GO" id="GO:0008915">
    <property type="term" value="F:lipid-A-disaccharide synthase activity"/>
    <property type="evidence" value="ECO:0007669"/>
    <property type="project" value="UniProtKB-UniRule"/>
</dbReference>
<dbReference type="GO" id="GO:0005543">
    <property type="term" value="F:phospholipid binding"/>
    <property type="evidence" value="ECO:0007669"/>
    <property type="project" value="TreeGrafter"/>
</dbReference>
<dbReference type="GO" id="GO:0009245">
    <property type="term" value="P:lipid A biosynthetic process"/>
    <property type="evidence" value="ECO:0007669"/>
    <property type="project" value="UniProtKB-UniRule"/>
</dbReference>
<dbReference type="HAMAP" id="MF_00392">
    <property type="entry name" value="LpxB"/>
    <property type="match status" value="1"/>
</dbReference>
<dbReference type="InterPro" id="IPR003835">
    <property type="entry name" value="Glyco_trans_19"/>
</dbReference>
<dbReference type="NCBIfam" id="TIGR00215">
    <property type="entry name" value="lpxB"/>
    <property type="match status" value="1"/>
</dbReference>
<dbReference type="PANTHER" id="PTHR30372">
    <property type="entry name" value="LIPID-A-DISACCHARIDE SYNTHASE"/>
    <property type="match status" value="1"/>
</dbReference>
<dbReference type="PANTHER" id="PTHR30372:SF4">
    <property type="entry name" value="LIPID-A-DISACCHARIDE SYNTHASE, MITOCHONDRIAL-RELATED"/>
    <property type="match status" value="1"/>
</dbReference>
<dbReference type="Pfam" id="PF02684">
    <property type="entry name" value="LpxB"/>
    <property type="match status" value="1"/>
</dbReference>
<dbReference type="SUPFAM" id="SSF53756">
    <property type="entry name" value="UDP-Glycosyltransferase/glycogen phosphorylase"/>
    <property type="match status" value="1"/>
</dbReference>
<protein>
    <recommendedName>
        <fullName evidence="1">Lipid-A-disaccharide synthase 2</fullName>
        <ecNumber evidence="1">2.4.1.182</ecNumber>
    </recommendedName>
</protein>
<organism>
    <name type="scientific">Legionella pneumophila (strain Lens)</name>
    <dbReference type="NCBI Taxonomy" id="297245"/>
    <lineage>
        <taxon>Bacteria</taxon>
        <taxon>Pseudomonadati</taxon>
        <taxon>Pseudomonadota</taxon>
        <taxon>Gammaproteobacteria</taxon>
        <taxon>Legionellales</taxon>
        <taxon>Legionellaceae</taxon>
        <taxon>Legionella</taxon>
    </lineage>
</organism>
<evidence type="ECO:0000255" key="1">
    <source>
        <dbReference type="HAMAP-Rule" id="MF_00392"/>
    </source>
</evidence>